<dbReference type="EC" id="3.1.26.3" evidence="1"/>
<dbReference type="EMBL" id="CP000139">
    <property type="protein sequence ID" value="ABR38740.1"/>
    <property type="molecule type" value="Genomic_DNA"/>
</dbReference>
<dbReference type="RefSeq" id="WP_005850138.1">
    <property type="nucleotide sequence ID" value="NZ_CAXUIZ010000002.1"/>
</dbReference>
<dbReference type="SMR" id="A6KZ76"/>
<dbReference type="STRING" id="435590.BVU_1049"/>
<dbReference type="PaxDb" id="435590-BVU_1049"/>
<dbReference type="GeneID" id="5302015"/>
<dbReference type="KEGG" id="bvu:BVU_1049"/>
<dbReference type="eggNOG" id="COG0571">
    <property type="taxonomic scope" value="Bacteria"/>
</dbReference>
<dbReference type="HOGENOM" id="CLU_000907_1_0_10"/>
<dbReference type="BioCyc" id="BVUL435590:G1G59-1093-MONOMER"/>
<dbReference type="Proteomes" id="UP000002861">
    <property type="component" value="Chromosome"/>
</dbReference>
<dbReference type="GO" id="GO:0005737">
    <property type="term" value="C:cytoplasm"/>
    <property type="evidence" value="ECO:0007669"/>
    <property type="project" value="UniProtKB-SubCell"/>
</dbReference>
<dbReference type="GO" id="GO:0003725">
    <property type="term" value="F:double-stranded RNA binding"/>
    <property type="evidence" value="ECO:0007669"/>
    <property type="project" value="TreeGrafter"/>
</dbReference>
<dbReference type="GO" id="GO:0046872">
    <property type="term" value="F:metal ion binding"/>
    <property type="evidence" value="ECO:0007669"/>
    <property type="project" value="UniProtKB-KW"/>
</dbReference>
<dbReference type="GO" id="GO:0004525">
    <property type="term" value="F:ribonuclease III activity"/>
    <property type="evidence" value="ECO:0007669"/>
    <property type="project" value="UniProtKB-UniRule"/>
</dbReference>
<dbReference type="GO" id="GO:0019843">
    <property type="term" value="F:rRNA binding"/>
    <property type="evidence" value="ECO:0007669"/>
    <property type="project" value="UniProtKB-KW"/>
</dbReference>
<dbReference type="GO" id="GO:0006397">
    <property type="term" value="P:mRNA processing"/>
    <property type="evidence" value="ECO:0007669"/>
    <property type="project" value="UniProtKB-UniRule"/>
</dbReference>
<dbReference type="GO" id="GO:0010468">
    <property type="term" value="P:regulation of gene expression"/>
    <property type="evidence" value="ECO:0007669"/>
    <property type="project" value="TreeGrafter"/>
</dbReference>
<dbReference type="GO" id="GO:0006364">
    <property type="term" value="P:rRNA processing"/>
    <property type="evidence" value="ECO:0007669"/>
    <property type="project" value="UniProtKB-UniRule"/>
</dbReference>
<dbReference type="GO" id="GO:0008033">
    <property type="term" value="P:tRNA processing"/>
    <property type="evidence" value="ECO:0007669"/>
    <property type="project" value="UniProtKB-KW"/>
</dbReference>
<dbReference type="CDD" id="cd10845">
    <property type="entry name" value="DSRM_RNAse_III_family"/>
    <property type="match status" value="1"/>
</dbReference>
<dbReference type="CDD" id="cd00593">
    <property type="entry name" value="RIBOc"/>
    <property type="match status" value="1"/>
</dbReference>
<dbReference type="Gene3D" id="3.30.160.20">
    <property type="match status" value="1"/>
</dbReference>
<dbReference type="Gene3D" id="1.10.1520.10">
    <property type="entry name" value="Ribonuclease III domain"/>
    <property type="match status" value="1"/>
</dbReference>
<dbReference type="HAMAP" id="MF_00104">
    <property type="entry name" value="RNase_III"/>
    <property type="match status" value="1"/>
</dbReference>
<dbReference type="InterPro" id="IPR014720">
    <property type="entry name" value="dsRBD_dom"/>
</dbReference>
<dbReference type="InterPro" id="IPR011907">
    <property type="entry name" value="RNase_III"/>
</dbReference>
<dbReference type="InterPro" id="IPR000999">
    <property type="entry name" value="RNase_III_dom"/>
</dbReference>
<dbReference type="InterPro" id="IPR036389">
    <property type="entry name" value="RNase_III_sf"/>
</dbReference>
<dbReference type="NCBIfam" id="TIGR02191">
    <property type="entry name" value="RNaseIII"/>
    <property type="match status" value="1"/>
</dbReference>
<dbReference type="PANTHER" id="PTHR11207:SF0">
    <property type="entry name" value="RIBONUCLEASE 3"/>
    <property type="match status" value="1"/>
</dbReference>
<dbReference type="PANTHER" id="PTHR11207">
    <property type="entry name" value="RIBONUCLEASE III"/>
    <property type="match status" value="1"/>
</dbReference>
<dbReference type="Pfam" id="PF00035">
    <property type="entry name" value="dsrm"/>
    <property type="match status" value="1"/>
</dbReference>
<dbReference type="Pfam" id="PF14622">
    <property type="entry name" value="Ribonucleas_3_3"/>
    <property type="match status" value="1"/>
</dbReference>
<dbReference type="SMART" id="SM00358">
    <property type="entry name" value="DSRM"/>
    <property type="match status" value="1"/>
</dbReference>
<dbReference type="SMART" id="SM00535">
    <property type="entry name" value="RIBOc"/>
    <property type="match status" value="1"/>
</dbReference>
<dbReference type="SUPFAM" id="SSF54768">
    <property type="entry name" value="dsRNA-binding domain-like"/>
    <property type="match status" value="1"/>
</dbReference>
<dbReference type="SUPFAM" id="SSF69065">
    <property type="entry name" value="RNase III domain-like"/>
    <property type="match status" value="1"/>
</dbReference>
<dbReference type="PROSITE" id="PS50137">
    <property type="entry name" value="DS_RBD"/>
    <property type="match status" value="1"/>
</dbReference>
<dbReference type="PROSITE" id="PS00517">
    <property type="entry name" value="RNASE_3_1"/>
    <property type="match status" value="1"/>
</dbReference>
<dbReference type="PROSITE" id="PS50142">
    <property type="entry name" value="RNASE_3_2"/>
    <property type="match status" value="1"/>
</dbReference>
<comment type="function">
    <text evidence="1">Digests double-stranded RNA. Involved in the processing of primary rRNA transcript to yield the immediate precursors to the large and small rRNAs (23S and 16S). Processes some mRNAs, and tRNAs when they are encoded in the rRNA operon. Processes pre-crRNA and tracrRNA of type II CRISPR loci if present in the organism.</text>
</comment>
<comment type="catalytic activity">
    <reaction evidence="1">
        <text>Endonucleolytic cleavage to 5'-phosphomonoester.</text>
        <dbReference type="EC" id="3.1.26.3"/>
    </reaction>
</comment>
<comment type="cofactor">
    <cofactor evidence="1">
        <name>Mg(2+)</name>
        <dbReference type="ChEBI" id="CHEBI:18420"/>
    </cofactor>
</comment>
<comment type="subunit">
    <text evidence="1">Homodimer.</text>
</comment>
<comment type="subcellular location">
    <subcellularLocation>
        <location evidence="1">Cytoplasm</location>
    </subcellularLocation>
</comment>
<comment type="similarity">
    <text evidence="1">Belongs to the ribonuclease III family.</text>
</comment>
<gene>
    <name evidence="1" type="primary">rnc</name>
    <name type="ordered locus">BVU_1049</name>
</gene>
<name>RNC_PHOV8</name>
<keyword id="KW-0963">Cytoplasm</keyword>
<keyword id="KW-0255">Endonuclease</keyword>
<keyword id="KW-0378">Hydrolase</keyword>
<keyword id="KW-0460">Magnesium</keyword>
<keyword id="KW-0479">Metal-binding</keyword>
<keyword id="KW-0507">mRNA processing</keyword>
<keyword id="KW-0540">Nuclease</keyword>
<keyword id="KW-0694">RNA-binding</keyword>
<keyword id="KW-0698">rRNA processing</keyword>
<keyword id="KW-0699">rRNA-binding</keyword>
<keyword id="KW-0819">tRNA processing</keyword>
<feature type="chain" id="PRO_1000075724" description="Ribonuclease 3">
    <location>
        <begin position="1"/>
        <end position="308"/>
    </location>
</feature>
<feature type="domain" description="RNase III" evidence="1">
    <location>
        <begin position="20"/>
        <end position="145"/>
    </location>
</feature>
<feature type="domain" description="DRBM" evidence="1">
    <location>
        <begin position="173"/>
        <end position="242"/>
    </location>
</feature>
<feature type="region of interest" description="Disordered" evidence="2">
    <location>
        <begin position="261"/>
        <end position="281"/>
    </location>
</feature>
<feature type="active site" evidence="1">
    <location>
        <position position="66"/>
    </location>
</feature>
<feature type="active site" evidence="1">
    <location>
        <position position="134"/>
    </location>
</feature>
<feature type="binding site" evidence="1">
    <location>
        <position position="62"/>
    </location>
    <ligand>
        <name>Mg(2+)</name>
        <dbReference type="ChEBI" id="CHEBI:18420"/>
    </ligand>
</feature>
<feature type="binding site" evidence="1">
    <location>
        <position position="131"/>
    </location>
    <ligand>
        <name>Mg(2+)</name>
        <dbReference type="ChEBI" id="CHEBI:18420"/>
    </ligand>
</feature>
<feature type="binding site" evidence="1">
    <location>
        <position position="134"/>
    </location>
    <ligand>
        <name>Mg(2+)</name>
        <dbReference type="ChEBI" id="CHEBI:18420"/>
    </ligand>
</feature>
<organism>
    <name type="scientific">Phocaeicola vulgatus (strain ATCC 8482 / DSM 1447 / JCM 5826 / CCUG 4940 / NBRC 14291 / NCTC 11154)</name>
    <name type="common">Bacteroides vulgatus</name>
    <dbReference type="NCBI Taxonomy" id="435590"/>
    <lineage>
        <taxon>Bacteria</taxon>
        <taxon>Pseudomonadati</taxon>
        <taxon>Bacteroidota</taxon>
        <taxon>Bacteroidia</taxon>
        <taxon>Bacteroidales</taxon>
        <taxon>Bacteroidaceae</taxon>
        <taxon>Phocaeicola</taxon>
    </lineage>
</organism>
<proteinExistence type="inferred from homology"/>
<sequence length="308" mass="35249">MFSNIKDRIRLLFRKDRESYLRFYKMLGFYPKDISIYEQALLHKSLSVKSEKGRLLNNERLEFLGDAILDAVVADIVYKRFEGKREGFLTNTRSKIVQRETLNRLAIEIGLDKLIKYTARQSSHNSYMCGNAFEALVGAIYLDRGYRACKYFMEHRIIGPYINLEKISRKEVNFKSKLIEWSQKNRFEVTFELITQSHDQGYNPTFESEVLVEGISGGKGTGYSKKESQQMAARVALGKIKNDSGFIECIFAAKTARELPQEEVTVSDSKPSDSGAVTPDLSLEEIKKTDVVEQIISEAEEKAFKENA</sequence>
<evidence type="ECO:0000255" key="1">
    <source>
        <dbReference type="HAMAP-Rule" id="MF_00104"/>
    </source>
</evidence>
<evidence type="ECO:0000256" key="2">
    <source>
        <dbReference type="SAM" id="MobiDB-lite"/>
    </source>
</evidence>
<reference key="1">
    <citation type="journal article" date="2007" name="PLoS Biol.">
        <title>Evolution of symbiotic bacteria in the distal human intestine.</title>
        <authorList>
            <person name="Xu J."/>
            <person name="Mahowald M.A."/>
            <person name="Ley R.E."/>
            <person name="Lozupone C.A."/>
            <person name="Hamady M."/>
            <person name="Martens E.C."/>
            <person name="Henrissat B."/>
            <person name="Coutinho P.M."/>
            <person name="Minx P."/>
            <person name="Latreille P."/>
            <person name="Cordum H."/>
            <person name="Van Brunt A."/>
            <person name="Kim K."/>
            <person name="Fulton R.S."/>
            <person name="Fulton L.A."/>
            <person name="Clifton S.W."/>
            <person name="Wilson R.K."/>
            <person name="Knight R.D."/>
            <person name="Gordon J.I."/>
        </authorList>
    </citation>
    <scope>NUCLEOTIDE SEQUENCE [LARGE SCALE GENOMIC DNA]</scope>
    <source>
        <strain>ATCC 8482 / DSM 1447 / JCM 5826 / CCUG 4940 / NBRC 14291 / NCTC 11154</strain>
    </source>
</reference>
<protein>
    <recommendedName>
        <fullName evidence="1">Ribonuclease 3</fullName>
        <ecNumber evidence="1">3.1.26.3</ecNumber>
    </recommendedName>
    <alternativeName>
        <fullName evidence="1">Ribonuclease III</fullName>
        <shortName evidence="1">RNase III</shortName>
    </alternativeName>
</protein>
<accession>A6KZ76</accession>